<proteinExistence type="inferred from homology"/>
<reference key="1">
    <citation type="journal article" date="2006" name="Nature">
        <title>Multiplex amplification of the mammoth mitochondrial genome and the evolution of Elephantidae.</title>
        <authorList>
            <person name="Krause J."/>
            <person name="Dear P.H."/>
            <person name="Pollack J.L."/>
            <person name="Slatkin M."/>
            <person name="Spriggs H."/>
            <person name="Barnes I."/>
            <person name="Lister A.M."/>
            <person name="Ebersberger I."/>
            <person name="Paeaebo S."/>
            <person name="Hofreiter M."/>
        </authorList>
    </citation>
    <scope>NUCLEOTIDE SEQUENCE [GENOMIC DNA]</scope>
</reference>
<reference key="2">
    <citation type="journal article" date="2006" name="PLoS Biol.">
        <title>Complete mitochondrial genome and phylogeny of Pleistocene mammoth Mammuthus primigenius.</title>
        <authorList>
            <person name="Rogaev E.I."/>
            <person name="Moliaka Y.K."/>
            <person name="Malyarchuk B.A."/>
            <person name="Kondrashov F.A."/>
            <person name="Derenko M.V."/>
            <person name="Chumakov I."/>
            <person name="Grigorenko A.P."/>
        </authorList>
    </citation>
    <scope>NUCLEOTIDE SEQUENCE [GENOMIC DNA]</scope>
    <source>
        <tissue>Muscle</tissue>
    </source>
</reference>
<comment type="function">
    <text evidence="1">Core subunit of the mitochondrial membrane respiratory chain NADH dehydrogenase (Complex I) that is believed to belong to the minimal assembly required for catalysis. Complex I functions in the transfer of electrons from NADH to the respiratory chain. The immediate electron acceptor for the enzyme is believed to be ubiquinone (By similarity).</text>
</comment>
<comment type="catalytic activity">
    <reaction>
        <text>a ubiquinone + NADH + 5 H(+)(in) = a ubiquinol + NAD(+) + 4 H(+)(out)</text>
        <dbReference type="Rhea" id="RHEA:29091"/>
        <dbReference type="Rhea" id="RHEA-COMP:9565"/>
        <dbReference type="Rhea" id="RHEA-COMP:9566"/>
        <dbReference type="ChEBI" id="CHEBI:15378"/>
        <dbReference type="ChEBI" id="CHEBI:16389"/>
        <dbReference type="ChEBI" id="CHEBI:17976"/>
        <dbReference type="ChEBI" id="CHEBI:57540"/>
        <dbReference type="ChEBI" id="CHEBI:57945"/>
        <dbReference type="EC" id="7.1.1.2"/>
    </reaction>
</comment>
<comment type="subcellular location">
    <subcellularLocation>
        <location evidence="1">Mitochondrion inner membrane</location>
        <topology evidence="1">Multi-pass membrane protein</topology>
    </subcellularLocation>
</comment>
<comment type="similarity">
    <text evidence="3">Belongs to the complex I subunit 1 family.</text>
</comment>
<sequence>MFLINVLTVTLPILLAVAFLTLVERKALGYMQLRKGPNVVGPYGLLQPIADAIKLFTKEPVYPQTSSKFLFTIAPILALTLALTVWAPLPMPYPLINLNLSLLFILAMSSLMVYSILWSGWASNSKYALMGALRAVAQTISYEVSMTTIILSMVLMNGSFTLTAFATTQEHLWLIFPMWPLMMMWFTSTLAETNRAPFDLTEGESELVSGFNVEYSAGPFALFFMAEYANIIMMNALTVILFMGTSCNPQMPEISTINFVVKTMILTICFLWVRASYPRFRYDQLMYLLWKNFLPLTLALCMWHISILISLACIPPQA</sequence>
<geneLocation type="mitochondrion"/>
<dbReference type="EC" id="7.1.1.2"/>
<dbReference type="EMBL" id="DQ188829">
    <property type="protein sequence ID" value="ABA29784.1"/>
    <property type="molecule type" value="Genomic_DNA"/>
</dbReference>
<dbReference type="EMBL" id="DQ316067">
    <property type="protein sequence ID" value="ABC17878.1"/>
    <property type="molecule type" value="Genomic_DNA"/>
</dbReference>
<dbReference type="RefSeq" id="YP_398754.1">
    <property type="nucleotide sequence ID" value="NC_007596.2"/>
</dbReference>
<dbReference type="SMR" id="Q38PS2"/>
<dbReference type="GeneID" id="3773141"/>
<dbReference type="CTD" id="4535"/>
<dbReference type="GO" id="GO:0005743">
    <property type="term" value="C:mitochondrial inner membrane"/>
    <property type="evidence" value="ECO:0007669"/>
    <property type="project" value="UniProtKB-SubCell"/>
</dbReference>
<dbReference type="GO" id="GO:0008137">
    <property type="term" value="F:NADH dehydrogenase (ubiquinone) activity"/>
    <property type="evidence" value="ECO:0007669"/>
    <property type="project" value="UniProtKB-EC"/>
</dbReference>
<dbReference type="GO" id="GO:0009060">
    <property type="term" value="P:aerobic respiration"/>
    <property type="evidence" value="ECO:0007669"/>
    <property type="project" value="TreeGrafter"/>
</dbReference>
<dbReference type="HAMAP" id="MF_01350">
    <property type="entry name" value="NDH1_NuoH"/>
    <property type="match status" value="1"/>
</dbReference>
<dbReference type="InterPro" id="IPR001694">
    <property type="entry name" value="NADH_UbQ_OxRdtase_su1/FPO"/>
</dbReference>
<dbReference type="InterPro" id="IPR018086">
    <property type="entry name" value="NADH_UbQ_OxRdtase_su1_CS"/>
</dbReference>
<dbReference type="PANTHER" id="PTHR11432">
    <property type="entry name" value="NADH DEHYDROGENASE SUBUNIT 1"/>
    <property type="match status" value="1"/>
</dbReference>
<dbReference type="PANTHER" id="PTHR11432:SF3">
    <property type="entry name" value="NADH-UBIQUINONE OXIDOREDUCTASE CHAIN 1"/>
    <property type="match status" value="1"/>
</dbReference>
<dbReference type="Pfam" id="PF00146">
    <property type="entry name" value="NADHdh"/>
    <property type="match status" value="1"/>
</dbReference>
<dbReference type="PROSITE" id="PS00667">
    <property type="entry name" value="COMPLEX1_ND1_1"/>
    <property type="match status" value="1"/>
</dbReference>
<dbReference type="PROSITE" id="PS00668">
    <property type="entry name" value="COMPLEX1_ND1_2"/>
    <property type="match status" value="1"/>
</dbReference>
<keyword id="KW-0249">Electron transport</keyword>
<keyword id="KW-0952">Extinct organism protein</keyword>
<keyword id="KW-0472">Membrane</keyword>
<keyword id="KW-0496">Mitochondrion</keyword>
<keyword id="KW-0999">Mitochondrion inner membrane</keyword>
<keyword id="KW-0520">NAD</keyword>
<keyword id="KW-0679">Respiratory chain</keyword>
<keyword id="KW-1278">Translocase</keyword>
<keyword id="KW-0812">Transmembrane</keyword>
<keyword id="KW-1133">Transmembrane helix</keyword>
<keyword id="KW-0813">Transport</keyword>
<keyword id="KW-0830">Ubiquinone</keyword>
<organism>
    <name type="scientific">Mammuthus primigenius</name>
    <name type="common">Siberian woolly mammoth</name>
    <dbReference type="NCBI Taxonomy" id="37349"/>
    <lineage>
        <taxon>Eukaryota</taxon>
        <taxon>Metazoa</taxon>
        <taxon>Chordata</taxon>
        <taxon>Craniata</taxon>
        <taxon>Vertebrata</taxon>
        <taxon>Euteleostomi</taxon>
        <taxon>Mammalia</taxon>
        <taxon>Eutheria</taxon>
        <taxon>Afrotheria</taxon>
        <taxon>Proboscidea</taxon>
        <taxon>Elephantidae</taxon>
        <taxon>Mammuthus</taxon>
    </lineage>
</organism>
<evidence type="ECO:0000250" key="1"/>
<evidence type="ECO:0000255" key="2"/>
<evidence type="ECO:0000305" key="3"/>
<feature type="chain" id="PRO_0000232847" description="NADH-ubiquinone oxidoreductase chain 1">
    <location>
        <begin position="1"/>
        <end position="318"/>
    </location>
</feature>
<feature type="transmembrane region" description="Helical" evidence="2">
    <location>
        <begin position="2"/>
        <end position="22"/>
    </location>
</feature>
<feature type="transmembrane region" description="Helical" evidence="2">
    <location>
        <begin position="69"/>
        <end position="89"/>
    </location>
</feature>
<feature type="transmembrane region" description="Helical" evidence="2">
    <location>
        <begin position="102"/>
        <end position="122"/>
    </location>
</feature>
<feature type="transmembrane region" description="Helical" evidence="2">
    <location>
        <begin position="146"/>
        <end position="166"/>
    </location>
</feature>
<feature type="transmembrane region" description="Helical" evidence="2">
    <location>
        <begin position="171"/>
        <end position="191"/>
    </location>
</feature>
<feature type="transmembrane region" description="Helical" evidence="2">
    <location>
        <begin position="222"/>
        <end position="242"/>
    </location>
</feature>
<feature type="transmembrane region" description="Helical" evidence="2">
    <location>
        <begin position="253"/>
        <end position="273"/>
    </location>
</feature>
<feature type="transmembrane region" description="Helical" evidence="2">
    <location>
        <begin position="294"/>
        <end position="314"/>
    </location>
</feature>
<feature type="sequence conflict" description="In Ref. 2; ABC17878." evidence="3" ref="2">
    <original>I</original>
    <variation>V</variation>
    <location>
        <position position="73"/>
    </location>
</feature>
<feature type="sequence conflict" description="In Ref. 2; ABC17878." evidence="3" ref="2">
    <original>M</original>
    <variation>I</variation>
    <location>
        <position position="264"/>
    </location>
</feature>
<name>NU1M_MAMPR</name>
<protein>
    <recommendedName>
        <fullName>NADH-ubiquinone oxidoreductase chain 1</fullName>
        <ecNumber>7.1.1.2</ecNumber>
    </recommendedName>
    <alternativeName>
        <fullName>NADH dehydrogenase subunit 1</fullName>
    </alternativeName>
</protein>
<gene>
    <name type="primary">MT-ND1</name>
    <name type="synonym">MTND1</name>
    <name type="synonym">NADH1</name>
    <name type="synonym">ND1</name>
</gene>
<accession>Q38PS2</accession>
<accession>Q2I3I7</accession>